<name>RBSB_SALTI</name>
<feature type="signal peptide" evidence="2">
    <location>
        <begin position="1"/>
        <end position="25"/>
    </location>
</feature>
<feature type="chain" id="PRO_0000031733" description="Ribose import binding protein RbsB">
    <location>
        <begin position="26"/>
        <end position="296"/>
    </location>
</feature>
<protein>
    <recommendedName>
        <fullName evidence="1">Ribose import binding protein RbsB</fullName>
    </recommendedName>
</protein>
<gene>
    <name type="primary">rbsB</name>
    <name type="synonym">rbsP</name>
    <name type="ordered locus">STY3894</name>
    <name type="ordered locus">t3635</name>
</gene>
<reference key="1">
    <citation type="journal article" date="2001" name="Nature">
        <title>Complete genome sequence of a multiple drug resistant Salmonella enterica serovar Typhi CT18.</title>
        <authorList>
            <person name="Parkhill J."/>
            <person name="Dougan G."/>
            <person name="James K.D."/>
            <person name="Thomson N.R."/>
            <person name="Pickard D."/>
            <person name="Wain J."/>
            <person name="Churcher C.M."/>
            <person name="Mungall K.L."/>
            <person name="Bentley S.D."/>
            <person name="Holden M.T.G."/>
            <person name="Sebaihia M."/>
            <person name="Baker S."/>
            <person name="Basham D."/>
            <person name="Brooks K."/>
            <person name="Chillingworth T."/>
            <person name="Connerton P."/>
            <person name="Cronin A."/>
            <person name="Davis P."/>
            <person name="Davies R.M."/>
            <person name="Dowd L."/>
            <person name="White N."/>
            <person name="Farrar J."/>
            <person name="Feltwell T."/>
            <person name="Hamlin N."/>
            <person name="Haque A."/>
            <person name="Hien T.T."/>
            <person name="Holroyd S."/>
            <person name="Jagels K."/>
            <person name="Krogh A."/>
            <person name="Larsen T.S."/>
            <person name="Leather S."/>
            <person name="Moule S."/>
            <person name="O'Gaora P."/>
            <person name="Parry C."/>
            <person name="Quail M.A."/>
            <person name="Rutherford K.M."/>
            <person name="Simmonds M."/>
            <person name="Skelton J."/>
            <person name="Stevens K."/>
            <person name="Whitehead S."/>
            <person name="Barrell B.G."/>
        </authorList>
    </citation>
    <scope>NUCLEOTIDE SEQUENCE [LARGE SCALE GENOMIC DNA]</scope>
    <source>
        <strain>CT18</strain>
    </source>
</reference>
<reference key="2">
    <citation type="journal article" date="2003" name="J. Bacteriol.">
        <title>Comparative genomics of Salmonella enterica serovar Typhi strains Ty2 and CT18.</title>
        <authorList>
            <person name="Deng W."/>
            <person name="Liou S.-R."/>
            <person name="Plunkett G. III"/>
            <person name="Mayhew G.F."/>
            <person name="Rose D.J."/>
            <person name="Burland V."/>
            <person name="Kodoyianni V."/>
            <person name="Schwartz D.C."/>
            <person name="Blattner F.R."/>
        </authorList>
    </citation>
    <scope>NUCLEOTIDE SEQUENCE [LARGE SCALE GENOMIC DNA]</scope>
    <source>
        <strain>ATCC 700931 / Ty2</strain>
    </source>
</reference>
<comment type="function">
    <text evidence="1">Part of the ABC transporter complex RbsABC involved in ribose import. Binds ribose.</text>
</comment>
<comment type="subunit">
    <text evidence="1">The complex is composed of an ATP-binding protein (RbsA), two transmembrane proteins (RbsC) and a solute-binding protein (RbsB).</text>
</comment>
<comment type="subcellular location">
    <subcellularLocation>
        <location evidence="1">Periplasm</location>
    </subcellularLocation>
</comment>
<comment type="similarity">
    <text evidence="3">Belongs to the bacterial solute-binding protein 2 family.</text>
</comment>
<proteinExistence type="inferred from homology"/>
<sequence length="296" mass="30963">MNMKKLATLVSAVALSATVSANAMAKDTIALVISTLNNPFFVSLKDGAQKEADKLGYNLVVLDSQNNPAKELANVQDLTVRGTKILLINPTDSDAVGNAVKMANQAKIPVITLDRQATKGDVVSHIASDNVLGGKIAGDYIAKKAGEGAKVIELQGIAGTSAARERGEGFQQAVAAHKFNVLASQPADFDRTKGLNVMQNLLTAHPDVQAVFAQNDEMALGALRALQTAGKADVMVVGFDGTPDGEKAVKDGKLAATIAQLPDQIGAKGVEVADKVLKGEKVQAKYPVDLKLVIKQ</sequence>
<accession>P0A2C6</accession>
<accession>P02926</accession>
<dbReference type="EMBL" id="AL513382">
    <property type="protein sequence ID" value="CAD03111.1"/>
    <property type="molecule type" value="Genomic_DNA"/>
</dbReference>
<dbReference type="EMBL" id="AE014613">
    <property type="protein sequence ID" value="AAO71132.1"/>
    <property type="molecule type" value="Genomic_DNA"/>
</dbReference>
<dbReference type="RefSeq" id="NP_458059.1">
    <property type="nucleotide sequence ID" value="NC_003198.1"/>
</dbReference>
<dbReference type="RefSeq" id="WP_001056260.1">
    <property type="nucleotide sequence ID" value="NZ_WSUR01000023.1"/>
</dbReference>
<dbReference type="SMR" id="P0A2C6"/>
<dbReference type="STRING" id="220341.gene:17587754"/>
<dbReference type="KEGG" id="stt:t3635"/>
<dbReference type="KEGG" id="sty:STY3894"/>
<dbReference type="PATRIC" id="fig|220341.7.peg.3974"/>
<dbReference type="eggNOG" id="COG1879">
    <property type="taxonomic scope" value="Bacteria"/>
</dbReference>
<dbReference type="HOGENOM" id="CLU_037628_3_2_6"/>
<dbReference type="OMA" id="QAVFAHN"/>
<dbReference type="OrthoDB" id="4827464at2"/>
<dbReference type="Proteomes" id="UP000000541">
    <property type="component" value="Chromosome"/>
</dbReference>
<dbReference type="Proteomes" id="UP000002670">
    <property type="component" value="Chromosome"/>
</dbReference>
<dbReference type="GO" id="GO:0042597">
    <property type="term" value="C:periplasmic space"/>
    <property type="evidence" value="ECO:0007669"/>
    <property type="project" value="UniProtKB-SubCell"/>
</dbReference>
<dbReference type="GO" id="GO:0030246">
    <property type="term" value="F:carbohydrate binding"/>
    <property type="evidence" value="ECO:0007669"/>
    <property type="project" value="UniProtKB-ARBA"/>
</dbReference>
<dbReference type="CDD" id="cd06323">
    <property type="entry name" value="PBP1_ribose_binding"/>
    <property type="match status" value="1"/>
</dbReference>
<dbReference type="FunFam" id="3.40.50.2300:FF:000036">
    <property type="entry name" value="D-ribose ABC transporter substrate-binding protein"/>
    <property type="match status" value="1"/>
</dbReference>
<dbReference type="Gene3D" id="3.40.50.2300">
    <property type="match status" value="2"/>
</dbReference>
<dbReference type="InterPro" id="IPR028082">
    <property type="entry name" value="Peripla_BP_I"/>
</dbReference>
<dbReference type="InterPro" id="IPR025997">
    <property type="entry name" value="SBP_2_dom"/>
</dbReference>
<dbReference type="NCBIfam" id="NF007936">
    <property type="entry name" value="PRK10653.1"/>
    <property type="match status" value="1"/>
</dbReference>
<dbReference type="PANTHER" id="PTHR46847">
    <property type="entry name" value="D-ALLOSE-BINDING PERIPLASMIC PROTEIN-RELATED"/>
    <property type="match status" value="1"/>
</dbReference>
<dbReference type="PANTHER" id="PTHR46847:SF1">
    <property type="entry name" value="D-ALLOSE-BINDING PERIPLASMIC PROTEIN-RELATED"/>
    <property type="match status" value="1"/>
</dbReference>
<dbReference type="Pfam" id="PF13407">
    <property type="entry name" value="Peripla_BP_4"/>
    <property type="match status" value="1"/>
</dbReference>
<dbReference type="SUPFAM" id="SSF53822">
    <property type="entry name" value="Periplasmic binding protein-like I"/>
    <property type="match status" value="1"/>
</dbReference>
<keyword id="KW-0574">Periplasm</keyword>
<keyword id="KW-0732">Signal</keyword>
<keyword id="KW-0762">Sugar transport</keyword>
<keyword id="KW-0813">Transport</keyword>
<organism>
    <name type="scientific">Salmonella typhi</name>
    <dbReference type="NCBI Taxonomy" id="90370"/>
    <lineage>
        <taxon>Bacteria</taxon>
        <taxon>Pseudomonadati</taxon>
        <taxon>Pseudomonadota</taxon>
        <taxon>Gammaproteobacteria</taxon>
        <taxon>Enterobacterales</taxon>
        <taxon>Enterobacteriaceae</taxon>
        <taxon>Salmonella</taxon>
    </lineage>
</organism>
<evidence type="ECO:0000250" key="1">
    <source>
        <dbReference type="UniProtKB" id="P02925"/>
    </source>
</evidence>
<evidence type="ECO:0000250" key="2">
    <source>
        <dbReference type="UniProtKB" id="P0A2C5"/>
    </source>
</evidence>
<evidence type="ECO:0000305" key="3"/>